<comment type="function">
    <text evidence="1">Produces ATP from ADP in the presence of a proton gradient across the membrane. The catalytic sites are hosted primarily by the beta subunits.</text>
</comment>
<comment type="catalytic activity">
    <reaction evidence="1">
        <text>ATP + H2O + 4 H(+)(in) = ADP + phosphate + 5 H(+)(out)</text>
        <dbReference type="Rhea" id="RHEA:57720"/>
        <dbReference type="ChEBI" id="CHEBI:15377"/>
        <dbReference type="ChEBI" id="CHEBI:15378"/>
        <dbReference type="ChEBI" id="CHEBI:30616"/>
        <dbReference type="ChEBI" id="CHEBI:43474"/>
        <dbReference type="ChEBI" id="CHEBI:456216"/>
        <dbReference type="EC" id="7.1.2.2"/>
    </reaction>
</comment>
<comment type="subunit">
    <text evidence="1">F-type ATPases have 2 components, CF(1) - the catalytic core - and CF(0) - the membrane proton channel. CF(1) has five subunits: alpha(3), beta(3), gamma(1), delta(1), epsilon(1). CF(0) has three main subunits: a(1), b(2) and c(9-12). The alpha and beta chains form an alternating ring which encloses part of the gamma chain. CF(1) is attached to CF(0) by a central stalk formed by the gamma and epsilon chains, while a peripheral stalk is formed by the delta and b chains.</text>
</comment>
<comment type="subcellular location">
    <subcellularLocation>
        <location evidence="1">Cell membrane</location>
        <topology evidence="1">Peripheral membrane protein</topology>
    </subcellularLocation>
</comment>
<comment type="similarity">
    <text evidence="1">Belongs to the ATPase alpha/beta chains family.</text>
</comment>
<reference key="1">
    <citation type="submission" date="2008-10" db="EMBL/GenBank/DDBJ databases">
        <title>Genome sequence of Ureaplasma urealyticum serovar 10 ATCC-33699.</title>
        <authorList>
            <person name="Shrivastava S."/>
            <person name="Methe B.A."/>
            <person name="Glass J."/>
            <person name="White K."/>
            <person name="Duffy L.B."/>
        </authorList>
    </citation>
    <scope>NUCLEOTIDE SEQUENCE [LARGE SCALE GENOMIC DNA]</scope>
    <source>
        <strain>ATCC 33699 / Western</strain>
    </source>
</reference>
<name>ATPB_UREU1</name>
<organism>
    <name type="scientific">Ureaplasma urealyticum serovar 10 (strain ATCC 33699 / Western)</name>
    <dbReference type="NCBI Taxonomy" id="565575"/>
    <lineage>
        <taxon>Bacteria</taxon>
        <taxon>Bacillati</taxon>
        <taxon>Mycoplasmatota</taxon>
        <taxon>Mycoplasmoidales</taxon>
        <taxon>Mycoplasmoidaceae</taxon>
        <taxon>Ureaplasma</taxon>
    </lineage>
</organism>
<evidence type="ECO:0000255" key="1">
    <source>
        <dbReference type="HAMAP-Rule" id="MF_01347"/>
    </source>
</evidence>
<protein>
    <recommendedName>
        <fullName evidence="1">ATP synthase subunit beta</fullName>
        <ecNumber evidence="1">7.1.2.2</ecNumber>
    </recommendedName>
    <alternativeName>
        <fullName evidence="1">ATP synthase F1 sector subunit beta</fullName>
    </alternativeName>
    <alternativeName>
        <fullName evidence="1">F-ATPase subunit beta</fullName>
    </alternativeName>
</protein>
<keyword id="KW-0066">ATP synthesis</keyword>
<keyword id="KW-0067">ATP-binding</keyword>
<keyword id="KW-1003">Cell membrane</keyword>
<keyword id="KW-0139">CF(1)</keyword>
<keyword id="KW-0375">Hydrogen ion transport</keyword>
<keyword id="KW-0406">Ion transport</keyword>
<keyword id="KW-0472">Membrane</keyword>
<keyword id="KW-0547">Nucleotide-binding</keyword>
<keyword id="KW-1278">Translocase</keyword>
<keyword id="KW-0813">Transport</keyword>
<feature type="chain" id="PRO_1000143559" description="ATP synthase subunit beta">
    <location>
        <begin position="1"/>
        <end position="464"/>
    </location>
</feature>
<feature type="binding site" evidence="1">
    <location>
        <begin position="152"/>
        <end position="159"/>
    </location>
    <ligand>
        <name>ATP</name>
        <dbReference type="ChEBI" id="CHEBI:30616"/>
    </ligand>
</feature>
<gene>
    <name evidence="1" type="primary">atpD</name>
    <name type="ordered locus">UUR10_0144</name>
</gene>
<sequence>MTEVKKGKINQILGPVVDVRFPSEWLPEINTALELNNHGSKLVLEVSQLVGDNIARCIAMDTTDGLVRGQEVINTEKPIMMPVGKQVLGRMFNVTGDPIDEQPAPTGKRMPIHRPAPSFAEQAEAIEILETGIKVVDLLVPFAKGGKIGLFGGAGVGKTVLMQELIHNIAKNHGGLSVFAGVGERTREGNDLYYEMAESDVLDKTALVFGQMNEPPGARMRVALSGLTMAEEFRDAFGQDVLLFIDNIFRFTQAGSEVSALLGRMPSAVGYQPTLAFEMGQLQERITSTKKGSITSVQAVYVPADDLTDPAPATTFSHLDAKVVLDRAIASLGLYPAISPLQSTSRLLDPLVVGVKHYSVARRVIEILQRFMELQDIIAILGMDELSEEDRQLVMRARKVRNYLSQPSHVAEKFSGQPGLSVKLEDTIEGFRKILDGECDDIHEQHFLYVGKIDDVFEKVAKSK</sequence>
<dbReference type="EC" id="7.1.2.2" evidence="1"/>
<dbReference type="EMBL" id="CP001184">
    <property type="protein sequence ID" value="ACI60141.1"/>
    <property type="molecule type" value="Genomic_DNA"/>
</dbReference>
<dbReference type="RefSeq" id="WP_004025634.1">
    <property type="nucleotide sequence ID" value="NC_011374.1"/>
</dbReference>
<dbReference type="SMR" id="B5ZAW1"/>
<dbReference type="STRING" id="565575.UUR10_0144"/>
<dbReference type="GeneID" id="93848628"/>
<dbReference type="KEGG" id="uue:UUR10_0144"/>
<dbReference type="eggNOG" id="COG0055">
    <property type="taxonomic scope" value="Bacteria"/>
</dbReference>
<dbReference type="HOGENOM" id="CLU_022398_0_2_14"/>
<dbReference type="OrthoDB" id="9801639at2"/>
<dbReference type="Proteomes" id="UP000002018">
    <property type="component" value="Chromosome"/>
</dbReference>
<dbReference type="GO" id="GO:0005886">
    <property type="term" value="C:plasma membrane"/>
    <property type="evidence" value="ECO:0007669"/>
    <property type="project" value="UniProtKB-SubCell"/>
</dbReference>
<dbReference type="GO" id="GO:0045259">
    <property type="term" value="C:proton-transporting ATP synthase complex"/>
    <property type="evidence" value="ECO:0007669"/>
    <property type="project" value="UniProtKB-KW"/>
</dbReference>
<dbReference type="GO" id="GO:0005524">
    <property type="term" value="F:ATP binding"/>
    <property type="evidence" value="ECO:0007669"/>
    <property type="project" value="UniProtKB-UniRule"/>
</dbReference>
<dbReference type="GO" id="GO:0016887">
    <property type="term" value="F:ATP hydrolysis activity"/>
    <property type="evidence" value="ECO:0007669"/>
    <property type="project" value="InterPro"/>
</dbReference>
<dbReference type="GO" id="GO:0046933">
    <property type="term" value="F:proton-transporting ATP synthase activity, rotational mechanism"/>
    <property type="evidence" value="ECO:0007669"/>
    <property type="project" value="UniProtKB-UniRule"/>
</dbReference>
<dbReference type="CDD" id="cd18110">
    <property type="entry name" value="ATP-synt_F1_beta_C"/>
    <property type="match status" value="1"/>
</dbReference>
<dbReference type="CDD" id="cd18115">
    <property type="entry name" value="ATP-synt_F1_beta_N"/>
    <property type="match status" value="1"/>
</dbReference>
<dbReference type="CDD" id="cd01133">
    <property type="entry name" value="F1-ATPase_beta_CD"/>
    <property type="match status" value="1"/>
</dbReference>
<dbReference type="FunFam" id="1.10.1140.10:FF:000005">
    <property type="entry name" value="ATP synthase subunit beta"/>
    <property type="match status" value="1"/>
</dbReference>
<dbReference type="FunFam" id="3.40.50.300:FF:000004">
    <property type="entry name" value="ATP synthase subunit beta"/>
    <property type="match status" value="1"/>
</dbReference>
<dbReference type="Gene3D" id="2.40.10.170">
    <property type="match status" value="1"/>
</dbReference>
<dbReference type="Gene3D" id="1.10.1140.10">
    <property type="entry name" value="Bovine Mitochondrial F1-atpase, Atp Synthase Beta Chain, Chain D, domain 3"/>
    <property type="match status" value="1"/>
</dbReference>
<dbReference type="Gene3D" id="3.40.50.300">
    <property type="entry name" value="P-loop containing nucleotide triphosphate hydrolases"/>
    <property type="match status" value="1"/>
</dbReference>
<dbReference type="HAMAP" id="MF_01347">
    <property type="entry name" value="ATP_synth_beta_bact"/>
    <property type="match status" value="1"/>
</dbReference>
<dbReference type="InterPro" id="IPR003593">
    <property type="entry name" value="AAA+_ATPase"/>
</dbReference>
<dbReference type="InterPro" id="IPR055190">
    <property type="entry name" value="ATP-synt_VA_C"/>
</dbReference>
<dbReference type="InterPro" id="IPR005722">
    <property type="entry name" value="ATP_synth_F1_bsu"/>
</dbReference>
<dbReference type="InterPro" id="IPR050053">
    <property type="entry name" value="ATPase_alpha/beta_chains"/>
</dbReference>
<dbReference type="InterPro" id="IPR004100">
    <property type="entry name" value="ATPase_F1/V1/A1_a/bsu_N"/>
</dbReference>
<dbReference type="InterPro" id="IPR036121">
    <property type="entry name" value="ATPase_F1/V1/A1_a/bsu_N_sf"/>
</dbReference>
<dbReference type="InterPro" id="IPR000194">
    <property type="entry name" value="ATPase_F1/V1/A1_a/bsu_nucl-bd"/>
</dbReference>
<dbReference type="InterPro" id="IPR024034">
    <property type="entry name" value="ATPase_F1/V1_b/a_C"/>
</dbReference>
<dbReference type="InterPro" id="IPR027417">
    <property type="entry name" value="P-loop_NTPase"/>
</dbReference>
<dbReference type="NCBIfam" id="TIGR01039">
    <property type="entry name" value="atpD"/>
    <property type="match status" value="1"/>
</dbReference>
<dbReference type="PANTHER" id="PTHR15184">
    <property type="entry name" value="ATP SYNTHASE"/>
    <property type="match status" value="1"/>
</dbReference>
<dbReference type="PANTHER" id="PTHR15184:SF71">
    <property type="entry name" value="ATP SYNTHASE SUBUNIT BETA, MITOCHONDRIAL"/>
    <property type="match status" value="1"/>
</dbReference>
<dbReference type="Pfam" id="PF00006">
    <property type="entry name" value="ATP-synt_ab"/>
    <property type="match status" value="1"/>
</dbReference>
<dbReference type="Pfam" id="PF02874">
    <property type="entry name" value="ATP-synt_ab_N"/>
    <property type="match status" value="1"/>
</dbReference>
<dbReference type="Pfam" id="PF22919">
    <property type="entry name" value="ATP-synt_VA_C"/>
    <property type="match status" value="1"/>
</dbReference>
<dbReference type="SMART" id="SM00382">
    <property type="entry name" value="AAA"/>
    <property type="match status" value="1"/>
</dbReference>
<dbReference type="SUPFAM" id="SSF47917">
    <property type="entry name" value="C-terminal domain of alpha and beta subunits of F1 ATP synthase"/>
    <property type="match status" value="1"/>
</dbReference>
<dbReference type="SUPFAM" id="SSF50615">
    <property type="entry name" value="N-terminal domain of alpha and beta subunits of F1 ATP synthase"/>
    <property type="match status" value="1"/>
</dbReference>
<dbReference type="SUPFAM" id="SSF52540">
    <property type="entry name" value="P-loop containing nucleoside triphosphate hydrolases"/>
    <property type="match status" value="1"/>
</dbReference>
<accession>B5ZAW1</accession>
<proteinExistence type="inferred from homology"/>